<sequence>MNIIAQLEAEQCAKIAEKRQLPAFQVGDTVRVMVRVTEGTRTRVQAYEGVCIARSGYGFNENFTVRKISYGEGVERVFPFYSPLIEGVELVRRGKVRRAKLYYLRALRGKAARIAEKRDYRKKNVQIVEEEVAPAVEANVETTTAE</sequence>
<protein>
    <recommendedName>
        <fullName evidence="1">Large ribosomal subunit protein bL19</fullName>
    </recommendedName>
    <alternativeName>
        <fullName evidence="2">50S ribosomal protein L19</fullName>
    </alternativeName>
</protein>
<keyword id="KW-0687">Ribonucleoprotein</keyword>
<keyword id="KW-0689">Ribosomal protein</keyword>
<comment type="function">
    <text evidence="1">This protein is located at the 30S-50S ribosomal subunit interface and may play a role in the structure and function of the aminoacyl-tRNA binding site.</text>
</comment>
<comment type="similarity">
    <text evidence="1">Belongs to the bacterial ribosomal protein bL19 family.</text>
</comment>
<evidence type="ECO:0000255" key="1">
    <source>
        <dbReference type="HAMAP-Rule" id="MF_00402"/>
    </source>
</evidence>
<evidence type="ECO:0000305" key="2"/>
<accession>A1UR22</accession>
<gene>
    <name evidence="1" type="primary">rplS</name>
    <name type="ordered locus">BARBAKC583_0087</name>
</gene>
<organism>
    <name type="scientific">Bartonella bacilliformis (strain ATCC 35685 / KC583 / Herrer 020/F12,63)</name>
    <dbReference type="NCBI Taxonomy" id="360095"/>
    <lineage>
        <taxon>Bacteria</taxon>
        <taxon>Pseudomonadati</taxon>
        <taxon>Pseudomonadota</taxon>
        <taxon>Alphaproteobacteria</taxon>
        <taxon>Hyphomicrobiales</taxon>
        <taxon>Bartonellaceae</taxon>
        <taxon>Bartonella</taxon>
    </lineage>
</organism>
<feature type="chain" id="PRO_1000049637" description="Large ribosomal subunit protein bL19">
    <location>
        <begin position="1"/>
        <end position="146"/>
    </location>
</feature>
<name>RL19_BARBK</name>
<reference key="1">
    <citation type="submission" date="2006-12" db="EMBL/GenBank/DDBJ databases">
        <authorList>
            <person name="Hendrix L."/>
            <person name="Mohamoud Y."/>
            <person name="Radune D."/>
            <person name="Shvartsbeyn A."/>
            <person name="Daugherty S."/>
            <person name="Dodson R."/>
            <person name="Durkin A.S."/>
            <person name="Harkins D."/>
            <person name="Huot H."/>
            <person name="Kothari S.P."/>
            <person name="Madupu R."/>
            <person name="Li J."/>
            <person name="Nelson W.C."/>
            <person name="Shrivastava S."/>
            <person name="Giglio M.G."/>
            <person name="Haft D."/>
            <person name="Selengut J."/>
            <person name="Fraser-Ligget C."/>
            <person name="Seshadri R."/>
        </authorList>
    </citation>
    <scope>NUCLEOTIDE SEQUENCE [LARGE SCALE GENOMIC DNA]</scope>
    <source>
        <strain>ATCC 35685 / KC583 / Herrer 020/F12,63</strain>
    </source>
</reference>
<proteinExistence type="inferred from homology"/>
<dbReference type="EMBL" id="CP000524">
    <property type="protein sequence ID" value="ABM45565.1"/>
    <property type="molecule type" value="Genomic_DNA"/>
</dbReference>
<dbReference type="RefSeq" id="WP_011807248.1">
    <property type="nucleotide sequence ID" value="NC_008783.1"/>
</dbReference>
<dbReference type="SMR" id="A1UR22"/>
<dbReference type="STRING" id="360095.BARBAKC583_0087"/>
<dbReference type="GeneID" id="4683915"/>
<dbReference type="KEGG" id="bbk:BARBAKC583_0087"/>
<dbReference type="PATRIC" id="fig|360095.6.peg.87"/>
<dbReference type="eggNOG" id="COG0335">
    <property type="taxonomic scope" value="Bacteria"/>
</dbReference>
<dbReference type="HOGENOM" id="CLU_103507_0_2_5"/>
<dbReference type="OrthoDB" id="9803541at2"/>
<dbReference type="Proteomes" id="UP000000643">
    <property type="component" value="Chromosome"/>
</dbReference>
<dbReference type="GO" id="GO:0022625">
    <property type="term" value="C:cytosolic large ribosomal subunit"/>
    <property type="evidence" value="ECO:0007669"/>
    <property type="project" value="TreeGrafter"/>
</dbReference>
<dbReference type="GO" id="GO:0003735">
    <property type="term" value="F:structural constituent of ribosome"/>
    <property type="evidence" value="ECO:0007669"/>
    <property type="project" value="InterPro"/>
</dbReference>
<dbReference type="GO" id="GO:0006412">
    <property type="term" value="P:translation"/>
    <property type="evidence" value="ECO:0007669"/>
    <property type="project" value="UniProtKB-UniRule"/>
</dbReference>
<dbReference type="FunFam" id="2.30.30.790:FF:000001">
    <property type="entry name" value="50S ribosomal protein L19"/>
    <property type="match status" value="1"/>
</dbReference>
<dbReference type="Gene3D" id="2.30.30.790">
    <property type="match status" value="1"/>
</dbReference>
<dbReference type="HAMAP" id="MF_00402">
    <property type="entry name" value="Ribosomal_bL19"/>
    <property type="match status" value="1"/>
</dbReference>
<dbReference type="InterPro" id="IPR001857">
    <property type="entry name" value="Ribosomal_bL19"/>
</dbReference>
<dbReference type="InterPro" id="IPR018257">
    <property type="entry name" value="Ribosomal_bL19_CS"/>
</dbReference>
<dbReference type="InterPro" id="IPR038657">
    <property type="entry name" value="Ribosomal_bL19_sf"/>
</dbReference>
<dbReference type="InterPro" id="IPR008991">
    <property type="entry name" value="Translation_prot_SH3-like_sf"/>
</dbReference>
<dbReference type="NCBIfam" id="TIGR01024">
    <property type="entry name" value="rplS_bact"/>
    <property type="match status" value="1"/>
</dbReference>
<dbReference type="PANTHER" id="PTHR15680:SF9">
    <property type="entry name" value="LARGE RIBOSOMAL SUBUNIT PROTEIN BL19M"/>
    <property type="match status" value="1"/>
</dbReference>
<dbReference type="PANTHER" id="PTHR15680">
    <property type="entry name" value="RIBOSOMAL PROTEIN L19"/>
    <property type="match status" value="1"/>
</dbReference>
<dbReference type="Pfam" id="PF01245">
    <property type="entry name" value="Ribosomal_L19"/>
    <property type="match status" value="1"/>
</dbReference>
<dbReference type="PIRSF" id="PIRSF002191">
    <property type="entry name" value="Ribosomal_L19"/>
    <property type="match status" value="1"/>
</dbReference>
<dbReference type="PRINTS" id="PR00061">
    <property type="entry name" value="RIBOSOMALL19"/>
</dbReference>
<dbReference type="SUPFAM" id="SSF50104">
    <property type="entry name" value="Translation proteins SH3-like domain"/>
    <property type="match status" value="1"/>
</dbReference>
<dbReference type="PROSITE" id="PS01015">
    <property type="entry name" value="RIBOSOMAL_L19"/>
    <property type="match status" value="1"/>
</dbReference>